<name>DNAJ_RUEST</name>
<evidence type="ECO:0000255" key="1">
    <source>
        <dbReference type="HAMAP-Rule" id="MF_01152"/>
    </source>
</evidence>
<dbReference type="EMBL" id="CP000377">
    <property type="protein sequence ID" value="ABF62742.1"/>
    <property type="molecule type" value="Genomic_DNA"/>
</dbReference>
<dbReference type="RefSeq" id="WP_011537380.1">
    <property type="nucleotide sequence ID" value="NC_008044.1"/>
</dbReference>
<dbReference type="SMR" id="Q1GKS4"/>
<dbReference type="STRING" id="292414.TM1040_0009"/>
<dbReference type="KEGG" id="sit:TM1040_0009"/>
<dbReference type="eggNOG" id="COG0484">
    <property type="taxonomic scope" value="Bacteria"/>
</dbReference>
<dbReference type="HOGENOM" id="CLU_017633_0_7_5"/>
<dbReference type="OrthoDB" id="9779889at2"/>
<dbReference type="Proteomes" id="UP000000636">
    <property type="component" value="Chromosome"/>
</dbReference>
<dbReference type="GO" id="GO:0005737">
    <property type="term" value="C:cytoplasm"/>
    <property type="evidence" value="ECO:0007669"/>
    <property type="project" value="UniProtKB-SubCell"/>
</dbReference>
<dbReference type="GO" id="GO:0005524">
    <property type="term" value="F:ATP binding"/>
    <property type="evidence" value="ECO:0007669"/>
    <property type="project" value="InterPro"/>
</dbReference>
<dbReference type="GO" id="GO:0031072">
    <property type="term" value="F:heat shock protein binding"/>
    <property type="evidence" value="ECO:0007669"/>
    <property type="project" value="InterPro"/>
</dbReference>
<dbReference type="GO" id="GO:0051082">
    <property type="term" value="F:unfolded protein binding"/>
    <property type="evidence" value="ECO:0007669"/>
    <property type="project" value="UniProtKB-UniRule"/>
</dbReference>
<dbReference type="GO" id="GO:0008270">
    <property type="term" value="F:zinc ion binding"/>
    <property type="evidence" value="ECO:0007669"/>
    <property type="project" value="UniProtKB-UniRule"/>
</dbReference>
<dbReference type="GO" id="GO:0051085">
    <property type="term" value="P:chaperone cofactor-dependent protein refolding"/>
    <property type="evidence" value="ECO:0007669"/>
    <property type="project" value="TreeGrafter"/>
</dbReference>
<dbReference type="GO" id="GO:0006260">
    <property type="term" value="P:DNA replication"/>
    <property type="evidence" value="ECO:0007669"/>
    <property type="project" value="UniProtKB-KW"/>
</dbReference>
<dbReference type="GO" id="GO:0042026">
    <property type="term" value="P:protein refolding"/>
    <property type="evidence" value="ECO:0007669"/>
    <property type="project" value="TreeGrafter"/>
</dbReference>
<dbReference type="GO" id="GO:0009408">
    <property type="term" value="P:response to heat"/>
    <property type="evidence" value="ECO:0007669"/>
    <property type="project" value="InterPro"/>
</dbReference>
<dbReference type="CDD" id="cd06257">
    <property type="entry name" value="DnaJ"/>
    <property type="match status" value="1"/>
</dbReference>
<dbReference type="CDD" id="cd10747">
    <property type="entry name" value="DnaJ_C"/>
    <property type="match status" value="1"/>
</dbReference>
<dbReference type="CDD" id="cd10719">
    <property type="entry name" value="DnaJ_zf"/>
    <property type="match status" value="1"/>
</dbReference>
<dbReference type="FunFam" id="2.10.230.10:FF:000002">
    <property type="entry name" value="Molecular chaperone DnaJ"/>
    <property type="match status" value="1"/>
</dbReference>
<dbReference type="FunFam" id="2.60.260.20:FF:000004">
    <property type="entry name" value="Molecular chaperone DnaJ"/>
    <property type="match status" value="1"/>
</dbReference>
<dbReference type="Gene3D" id="1.10.287.110">
    <property type="entry name" value="DnaJ domain"/>
    <property type="match status" value="1"/>
</dbReference>
<dbReference type="Gene3D" id="2.10.230.10">
    <property type="entry name" value="Heat shock protein DnaJ, cysteine-rich domain"/>
    <property type="match status" value="1"/>
</dbReference>
<dbReference type="Gene3D" id="2.60.260.20">
    <property type="entry name" value="Urease metallochaperone UreE, N-terminal domain"/>
    <property type="match status" value="2"/>
</dbReference>
<dbReference type="HAMAP" id="MF_01152">
    <property type="entry name" value="DnaJ"/>
    <property type="match status" value="1"/>
</dbReference>
<dbReference type="InterPro" id="IPR012724">
    <property type="entry name" value="DnaJ"/>
</dbReference>
<dbReference type="InterPro" id="IPR002939">
    <property type="entry name" value="DnaJ_C"/>
</dbReference>
<dbReference type="InterPro" id="IPR001623">
    <property type="entry name" value="DnaJ_domain"/>
</dbReference>
<dbReference type="InterPro" id="IPR018253">
    <property type="entry name" value="DnaJ_domain_CS"/>
</dbReference>
<dbReference type="InterPro" id="IPR008971">
    <property type="entry name" value="HSP40/DnaJ_pept-bd"/>
</dbReference>
<dbReference type="InterPro" id="IPR001305">
    <property type="entry name" value="HSP_DnaJ_Cys-rich_dom"/>
</dbReference>
<dbReference type="InterPro" id="IPR036410">
    <property type="entry name" value="HSP_DnaJ_Cys-rich_dom_sf"/>
</dbReference>
<dbReference type="InterPro" id="IPR036869">
    <property type="entry name" value="J_dom_sf"/>
</dbReference>
<dbReference type="NCBIfam" id="TIGR02349">
    <property type="entry name" value="DnaJ_bact"/>
    <property type="match status" value="1"/>
</dbReference>
<dbReference type="NCBIfam" id="NF008035">
    <property type="entry name" value="PRK10767.1"/>
    <property type="match status" value="1"/>
</dbReference>
<dbReference type="PANTHER" id="PTHR43096:SF48">
    <property type="entry name" value="CHAPERONE PROTEIN DNAJ"/>
    <property type="match status" value="1"/>
</dbReference>
<dbReference type="PANTHER" id="PTHR43096">
    <property type="entry name" value="DNAJ HOMOLOG 1, MITOCHONDRIAL-RELATED"/>
    <property type="match status" value="1"/>
</dbReference>
<dbReference type="Pfam" id="PF00226">
    <property type="entry name" value="DnaJ"/>
    <property type="match status" value="1"/>
</dbReference>
<dbReference type="Pfam" id="PF01556">
    <property type="entry name" value="DnaJ_C"/>
    <property type="match status" value="1"/>
</dbReference>
<dbReference type="Pfam" id="PF00684">
    <property type="entry name" value="DnaJ_CXXCXGXG"/>
    <property type="match status" value="1"/>
</dbReference>
<dbReference type="PRINTS" id="PR00625">
    <property type="entry name" value="JDOMAIN"/>
</dbReference>
<dbReference type="SMART" id="SM00271">
    <property type="entry name" value="DnaJ"/>
    <property type="match status" value="1"/>
</dbReference>
<dbReference type="SUPFAM" id="SSF46565">
    <property type="entry name" value="Chaperone J-domain"/>
    <property type="match status" value="1"/>
</dbReference>
<dbReference type="SUPFAM" id="SSF57938">
    <property type="entry name" value="DnaJ/Hsp40 cysteine-rich domain"/>
    <property type="match status" value="1"/>
</dbReference>
<dbReference type="SUPFAM" id="SSF49493">
    <property type="entry name" value="HSP40/DnaJ peptide-binding domain"/>
    <property type="match status" value="2"/>
</dbReference>
<dbReference type="PROSITE" id="PS00636">
    <property type="entry name" value="DNAJ_1"/>
    <property type="match status" value="1"/>
</dbReference>
<dbReference type="PROSITE" id="PS50076">
    <property type="entry name" value="DNAJ_2"/>
    <property type="match status" value="1"/>
</dbReference>
<dbReference type="PROSITE" id="PS51188">
    <property type="entry name" value="ZF_CR"/>
    <property type="match status" value="1"/>
</dbReference>
<reference key="1">
    <citation type="submission" date="2006-05" db="EMBL/GenBank/DDBJ databases">
        <title>Complete sequence of chromosome of Silicibacter sp. TM1040.</title>
        <authorList>
            <consortium name="US DOE Joint Genome Institute"/>
            <person name="Copeland A."/>
            <person name="Lucas S."/>
            <person name="Lapidus A."/>
            <person name="Barry K."/>
            <person name="Detter J.C."/>
            <person name="Glavina del Rio T."/>
            <person name="Hammon N."/>
            <person name="Israni S."/>
            <person name="Dalin E."/>
            <person name="Tice H."/>
            <person name="Pitluck S."/>
            <person name="Brettin T."/>
            <person name="Bruce D."/>
            <person name="Han C."/>
            <person name="Tapia R."/>
            <person name="Goodwin L."/>
            <person name="Thompson L.S."/>
            <person name="Gilna P."/>
            <person name="Schmutz J."/>
            <person name="Larimer F."/>
            <person name="Land M."/>
            <person name="Hauser L."/>
            <person name="Kyrpides N."/>
            <person name="Kim E."/>
            <person name="Belas R."/>
            <person name="Moran M.A."/>
            <person name="Buchan A."/>
            <person name="Gonzalez J.M."/>
            <person name="Schell M.A."/>
            <person name="Sun F."/>
            <person name="Richardson P."/>
        </authorList>
    </citation>
    <scope>NUCLEOTIDE SEQUENCE [LARGE SCALE GENOMIC DNA]</scope>
    <source>
        <strain>TM1040</strain>
    </source>
</reference>
<keyword id="KW-0143">Chaperone</keyword>
<keyword id="KW-0963">Cytoplasm</keyword>
<keyword id="KW-0235">DNA replication</keyword>
<keyword id="KW-0479">Metal-binding</keyword>
<keyword id="KW-1185">Reference proteome</keyword>
<keyword id="KW-0677">Repeat</keyword>
<keyword id="KW-0346">Stress response</keyword>
<keyword id="KW-0862">Zinc</keyword>
<keyword id="KW-0863">Zinc-finger</keyword>
<feature type="chain" id="PRO_1000085305" description="Chaperone protein DnaJ">
    <location>
        <begin position="1"/>
        <end position="385"/>
    </location>
</feature>
<feature type="domain" description="J" evidence="1">
    <location>
        <begin position="5"/>
        <end position="70"/>
    </location>
</feature>
<feature type="repeat" description="CXXCXGXG motif">
    <location>
        <begin position="156"/>
        <end position="163"/>
    </location>
</feature>
<feature type="repeat" description="CXXCXGXG motif">
    <location>
        <begin position="173"/>
        <end position="180"/>
    </location>
</feature>
<feature type="repeat" description="CXXCXGXG motif">
    <location>
        <begin position="195"/>
        <end position="202"/>
    </location>
</feature>
<feature type="repeat" description="CXXCXGXG motif">
    <location>
        <begin position="209"/>
        <end position="216"/>
    </location>
</feature>
<feature type="zinc finger region" description="CR-type" evidence="1">
    <location>
        <begin position="143"/>
        <end position="221"/>
    </location>
</feature>
<feature type="binding site" evidence="1">
    <location>
        <position position="156"/>
    </location>
    <ligand>
        <name>Zn(2+)</name>
        <dbReference type="ChEBI" id="CHEBI:29105"/>
        <label>1</label>
    </ligand>
</feature>
<feature type="binding site" evidence="1">
    <location>
        <position position="159"/>
    </location>
    <ligand>
        <name>Zn(2+)</name>
        <dbReference type="ChEBI" id="CHEBI:29105"/>
        <label>1</label>
    </ligand>
</feature>
<feature type="binding site" evidence="1">
    <location>
        <position position="173"/>
    </location>
    <ligand>
        <name>Zn(2+)</name>
        <dbReference type="ChEBI" id="CHEBI:29105"/>
        <label>2</label>
    </ligand>
</feature>
<feature type="binding site" evidence="1">
    <location>
        <position position="176"/>
    </location>
    <ligand>
        <name>Zn(2+)</name>
        <dbReference type="ChEBI" id="CHEBI:29105"/>
        <label>2</label>
    </ligand>
</feature>
<feature type="binding site" evidence="1">
    <location>
        <position position="195"/>
    </location>
    <ligand>
        <name>Zn(2+)</name>
        <dbReference type="ChEBI" id="CHEBI:29105"/>
        <label>2</label>
    </ligand>
</feature>
<feature type="binding site" evidence="1">
    <location>
        <position position="198"/>
    </location>
    <ligand>
        <name>Zn(2+)</name>
        <dbReference type="ChEBI" id="CHEBI:29105"/>
        <label>2</label>
    </ligand>
</feature>
<feature type="binding site" evidence="1">
    <location>
        <position position="209"/>
    </location>
    <ligand>
        <name>Zn(2+)</name>
        <dbReference type="ChEBI" id="CHEBI:29105"/>
        <label>1</label>
    </ligand>
</feature>
<feature type="binding site" evidence="1">
    <location>
        <position position="212"/>
    </location>
    <ligand>
        <name>Zn(2+)</name>
        <dbReference type="ChEBI" id="CHEBI:29105"/>
        <label>1</label>
    </ligand>
</feature>
<gene>
    <name evidence="1" type="primary">dnaJ</name>
    <name type="ordered locus">TM1040_0009</name>
</gene>
<accession>Q1GKS4</accession>
<protein>
    <recommendedName>
        <fullName evidence="1">Chaperone protein DnaJ</fullName>
    </recommendedName>
</protein>
<organism>
    <name type="scientific">Ruegeria sp. (strain TM1040)</name>
    <name type="common">Silicibacter sp.</name>
    <dbReference type="NCBI Taxonomy" id="292414"/>
    <lineage>
        <taxon>Bacteria</taxon>
        <taxon>Pseudomonadati</taxon>
        <taxon>Pseudomonadota</taxon>
        <taxon>Alphaproteobacteria</taxon>
        <taxon>Rhodobacterales</taxon>
        <taxon>Roseobacteraceae</taxon>
        <taxon>Ruegeria</taxon>
    </lineage>
</organism>
<comment type="function">
    <text evidence="1">Participates actively in the response to hyperosmotic and heat shock by preventing the aggregation of stress-denatured proteins and by disaggregating proteins, also in an autonomous, DnaK-independent fashion. Unfolded proteins bind initially to DnaJ; upon interaction with the DnaJ-bound protein, DnaK hydrolyzes its bound ATP, resulting in the formation of a stable complex. GrpE releases ADP from DnaK; ATP binding to DnaK triggers the release of the substrate protein, thus completing the reaction cycle. Several rounds of ATP-dependent interactions between DnaJ, DnaK and GrpE are required for fully efficient folding. Also involved, together with DnaK and GrpE, in the DNA replication of plasmids through activation of initiation proteins.</text>
</comment>
<comment type="cofactor">
    <cofactor evidence="1">
        <name>Zn(2+)</name>
        <dbReference type="ChEBI" id="CHEBI:29105"/>
    </cofactor>
    <text evidence="1">Binds 2 Zn(2+) ions per monomer.</text>
</comment>
<comment type="subunit">
    <text evidence="1">Homodimer.</text>
</comment>
<comment type="subcellular location">
    <subcellularLocation>
        <location evidence="1">Cytoplasm</location>
    </subcellularLocation>
</comment>
<comment type="domain">
    <text evidence="1">The J domain is necessary and sufficient to stimulate DnaK ATPase activity. Zinc center 1 plays an important role in the autonomous, DnaK-independent chaperone activity of DnaJ. Zinc center 2 is essential for interaction with DnaK and for DnaJ activity.</text>
</comment>
<comment type="similarity">
    <text evidence="1">Belongs to the DnaJ family.</text>
</comment>
<sequence length="385" mass="41096">MSKRDYYEVLGVSKGASADEIKKGFRKKAKELHPDRNADNPDAEAQFKEANEAYDVLKDPERKAAYDRYGHAAFENGMGGGGGGRAGGHPGGDFSSAFSDVFDDLFGDFMGGGGGRAGARQRATRGADLRYNLRLSLEEAFAGLHKTINVPTSVSCTSCEGTGAEGGAEPTTCPTCSGMGKVRAQQGFFTVERTCPTCSGLGQMIKNPCKTCNGHGRVEKDRSLSVNIPAGVETGTRIRLAGEGEAGLRGGPPGDLYIFIEVARHELFEREGNNLHCRVPVSMAKAALGGAIEVPTIDGGRGRVQIPEGSQSGRQMRLRGKGMPALRGGGTGDMFIELAVETPVNLTPRQKEILKEFDEISEENTNPETRSFFSSVKSFWDGMKG</sequence>
<proteinExistence type="inferred from homology"/>